<evidence type="ECO:0000255" key="1">
    <source>
        <dbReference type="HAMAP-Rule" id="MF_00563"/>
    </source>
</evidence>
<organism>
    <name type="scientific">Mycobacterium tuberculosis (strain ATCC 25177 / H37Ra)</name>
    <dbReference type="NCBI Taxonomy" id="419947"/>
    <lineage>
        <taxon>Bacteria</taxon>
        <taxon>Bacillati</taxon>
        <taxon>Actinomycetota</taxon>
        <taxon>Actinomycetes</taxon>
        <taxon>Mycobacteriales</taxon>
        <taxon>Mycobacteriaceae</taxon>
        <taxon>Mycobacterium</taxon>
        <taxon>Mycobacterium tuberculosis complex</taxon>
    </lineage>
</organism>
<gene>
    <name evidence="1" type="primary">ahcY</name>
    <name type="ordered locus">MRA_3289</name>
</gene>
<dbReference type="EC" id="3.13.2.1" evidence="1"/>
<dbReference type="EMBL" id="CP000611">
    <property type="protein sequence ID" value="ABQ75072.1"/>
    <property type="molecule type" value="Genomic_DNA"/>
</dbReference>
<dbReference type="RefSeq" id="WP_003417039.1">
    <property type="nucleotide sequence ID" value="NZ_CP016972.1"/>
</dbReference>
<dbReference type="SMR" id="A5U7S2"/>
<dbReference type="GeneID" id="45427242"/>
<dbReference type="KEGG" id="mra:MRA_3289"/>
<dbReference type="eggNOG" id="COG0499">
    <property type="taxonomic scope" value="Bacteria"/>
</dbReference>
<dbReference type="HOGENOM" id="CLU_025194_2_1_11"/>
<dbReference type="UniPathway" id="UPA00314">
    <property type="reaction ID" value="UER00076"/>
</dbReference>
<dbReference type="Proteomes" id="UP000001988">
    <property type="component" value="Chromosome"/>
</dbReference>
<dbReference type="GO" id="GO:0005829">
    <property type="term" value="C:cytosol"/>
    <property type="evidence" value="ECO:0007669"/>
    <property type="project" value="TreeGrafter"/>
</dbReference>
<dbReference type="GO" id="GO:0004013">
    <property type="term" value="F:adenosylhomocysteinase activity"/>
    <property type="evidence" value="ECO:0007669"/>
    <property type="project" value="UniProtKB-UniRule"/>
</dbReference>
<dbReference type="GO" id="GO:0071269">
    <property type="term" value="P:L-homocysteine biosynthetic process"/>
    <property type="evidence" value="ECO:0007669"/>
    <property type="project" value="UniProtKB-UniRule"/>
</dbReference>
<dbReference type="GO" id="GO:0006730">
    <property type="term" value="P:one-carbon metabolic process"/>
    <property type="evidence" value="ECO:0007669"/>
    <property type="project" value="UniProtKB-KW"/>
</dbReference>
<dbReference type="GO" id="GO:0033353">
    <property type="term" value="P:S-adenosylmethionine cycle"/>
    <property type="evidence" value="ECO:0007669"/>
    <property type="project" value="TreeGrafter"/>
</dbReference>
<dbReference type="CDD" id="cd00401">
    <property type="entry name" value="SAHH"/>
    <property type="match status" value="1"/>
</dbReference>
<dbReference type="FunFam" id="3.40.50.720:FF:000004">
    <property type="entry name" value="Adenosylhomocysteinase"/>
    <property type="match status" value="1"/>
</dbReference>
<dbReference type="Gene3D" id="3.40.50.1480">
    <property type="entry name" value="Adenosylhomocysteinase-like"/>
    <property type="match status" value="1"/>
</dbReference>
<dbReference type="Gene3D" id="3.40.50.720">
    <property type="entry name" value="NAD(P)-binding Rossmann-like Domain"/>
    <property type="match status" value="1"/>
</dbReference>
<dbReference type="HAMAP" id="MF_00563">
    <property type="entry name" value="AdoHcyase"/>
    <property type="match status" value="1"/>
</dbReference>
<dbReference type="InterPro" id="IPR042172">
    <property type="entry name" value="Adenosylhomocyst_ase-like_sf"/>
</dbReference>
<dbReference type="InterPro" id="IPR000043">
    <property type="entry name" value="Adenosylhomocysteinase-like"/>
</dbReference>
<dbReference type="InterPro" id="IPR015878">
    <property type="entry name" value="Ado_hCys_hydrolase_NAD-bd"/>
</dbReference>
<dbReference type="InterPro" id="IPR036291">
    <property type="entry name" value="NAD(P)-bd_dom_sf"/>
</dbReference>
<dbReference type="InterPro" id="IPR020082">
    <property type="entry name" value="S-Ado-L-homoCys_hydrolase_CS"/>
</dbReference>
<dbReference type="NCBIfam" id="TIGR00936">
    <property type="entry name" value="ahcY"/>
    <property type="match status" value="1"/>
</dbReference>
<dbReference type="NCBIfam" id="NF004005">
    <property type="entry name" value="PRK05476.2-3"/>
    <property type="match status" value="1"/>
</dbReference>
<dbReference type="PANTHER" id="PTHR23420">
    <property type="entry name" value="ADENOSYLHOMOCYSTEINASE"/>
    <property type="match status" value="1"/>
</dbReference>
<dbReference type="PANTHER" id="PTHR23420:SF0">
    <property type="entry name" value="ADENOSYLHOMOCYSTEINASE"/>
    <property type="match status" value="1"/>
</dbReference>
<dbReference type="Pfam" id="PF05221">
    <property type="entry name" value="AdoHcyase"/>
    <property type="match status" value="1"/>
</dbReference>
<dbReference type="Pfam" id="PF00670">
    <property type="entry name" value="AdoHcyase_NAD"/>
    <property type="match status" value="1"/>
</dbReference>
<dbReference type="PIRSF" id="PIRSF001109">
    <property type="entry name" value="Ad_hcy_hydrolase"/>
    <property type="match status" value="1"/>
</dbReference>
<dbReference type="SMART" id="SM00996">
    <property type="entry name" value="AdoHcyase"/>
    <property type="match status" value="1"/>
</dbReference>
<dbReference type="SMART" id="SM00997">
    <property type="entry name" value="AdoHcyase_NAD"/>
    <property type="match status" value="1"/>
</dbReference>
<dbReference type="SUPFAM" id="SSF52283">
    <property type="entry name" value="Formate/glycerate dehydrogenase catalytic domain-like"/>
    <property type="match status" value="1"/>
</dbReference>
<dbReference type="SUPFAM" id="SSF51735">
    <property type="entry name" value="NAD(P)-binding Rossmann-fold domains"/>
    <property type="match status" value="1"/>
</dbReference>
<dbReference type="PROSITE" id="PS00738">
    <property type="entry name" value="ADOHCYASE_1"/>
    <property type="match status" value="1"/>
</dbReference>
<dbReference type="PROSITE" id="PS00739">
    <property type="entry name" value="ADOHCYASE_2"/>
    <property type="match status" value="1"/>
</dbReference>
<accession>A5U7S2</accession>
<sequence>MTGNLVTKNSLTPDVRNGIDFKIADLSLADFGRKELRIAEHEMPGLMSLRREYAEVQPLKGARISGSLHMTVQTAVLIETLTALGAEVRWASCNIFSTQDHAAAAVVVGPHGTPDEPKGVPVFAWKGETLEEYWWAAEQMLTWPDPDKPANMILDDGGDATMLVLRGMQYEKAGVVPPAEEDDPAEWKVFLNLLRTRFETDKDKWTKIAESVKGVTEETTTGVLRLYQFAAAGDLAFPAINVNDSVTKSKFDNKYGTRHSLIDGINRGTDALIGGKKVLICGYGDVGKGCAEAMKGQGARVSVTEIDPINALQAMMEGFDVVTVEEAIGDADIVVTATGNKDIIMLEHIKAMKDHAILGNIGHFDNEIDMAGLERSGATRVNVKPQVDLWTFGDTGRSIIVLSEGRLLNLGNATGHPSFVMSNSFANQTIAQIELWTKNDEYDNEVYRLPKHLDEKVARIHVEALGGHLTKLTKEQAEYLGVDVEGPYKPDHYRY</sequence>
<comment type="function">
    <text evidence="1">May play a key role in the regulation of the intracellular concentration of adenosylhomocysteine.</text>
</comment>
<comment type="catalytic activity">
    <reaction evidence="1">
        <text>S-adenosyl-L-homocysteine + H2O = L-homocysteine + adenosine</text>
        <dbReference type="Rhea" id="RHEA:21708"/>
        <dbReference type="ChEBI" id="CHEBI:15377"/>
        <dbReference type="ChEBI" id="CHEBI:16335"/>
        <dbReference type="ChEBI" id="CHEBI:57856"/>
        <dbReference type="ChEBI" id="CHEBI:58199"/>
        <dbReference type="EC" id="3.13.2.1"/>
    </reaction>
</comment>
<comment type="cofactor">
    <cofactor evidence="1">
        <name>NAD(+)</name>
        <dbReference type="ChEBI" id="CHEBI:57540"/>
    </cofactor>
    <text evidence="1">Binds 1 NAD(+) per subunit.</text>
</comment>
<comment type="pathway">
    <text evidence="1">Amino-acid biosynthesis; L-homocysteine biosynthesis; L-homocysteine from S-adenosyl-L-homocysteine: step 1/1.</text>
</comment>
<comment type="subcellular location">
    <subcellularLocation>
        <location evidence="1">Cytoplasm</location>
    </subcellularLocation>
</comment>
<comment type="similarity">
    <text evidence="1">Belongs to the adenosylhomocysteinase family.</text>
</comment>
<proteinExistence type="inferred from homology"/>
<reference key="1">
    <citation type="journal article" date="2008" name="PLoS ONE">
        <title>Genetic basis of virulence attenuation revealed by comparative genomic analysis of Mycobacterium tuberculosis strain H37Ra versus H37Rv.</title>
        <authorList>
            <person name="Zheng H."/>
            <person name="Lu L."/>
            <person name="Wang B."/>
            <person name="Pu S."/>
            <person name="Zhang X."/>
            <person name="Zhu G."/>
            <person name="Shi W."/>
            <person name="Zhang L."/>
            <person name="Wang H."/>
            <person name="Wang S."/>
            <person name="Zhao G."/>
            <person name="Zhang Y."/>
        </authorList>
    </citation>
    <scope>NUCLEOTIDE SEQUENCE [LARGE SCALE GENOMIC DNA]</scope>
    <source>
        <strain>ATCC 25177 / H37Ra</strain>
    </source>
</reference>
<name>SAHH_MYCTA</name>
<keyword id="KW-0963">Cytoplasm</keyword>
<keyword id="KW-0378">Hydrolase</keyword>
<keyword id="KW-0520">NAD</keyword>
<keyword id="KW-0554">One-carbon metabolism</keyword>
<keyword id="KW-1185">Reference proteome</keyword>
<feature type="chain" id="PRO_1000024736" description="Adenosylhomocysteinase">
    <location>
        <begin position="1"/>
        <end position="495"/>
    </location>
</feature>
<feature type="binding site" evidence="1">
    <location>
        <position position="71"/>
    </location>
    <ligand>
        <name>substrate</name>
    </ligand>
</feature>
<feature type="binding site" evidence="1">
    <location>
        <position position="156"/>
    </location>
    <ligand>
        <name>substrate</name>
    </ligand>
</feature>
<feature type="binding site" evidence="1">
    <location>
        <position position="218"/>
    </location>
    <ligand>
        <name>substrate</name>
    </ligand>
</feature>
<feature type="binding site" evidence="1">
    <location>
        <begin position="219"/>
        <end position="221"/>
    </location>
    <ligand>
        <name>NAD(+)</name>
        <dbReference type="ChEBI" id="CHEBI:57540"/>
    </ligand>
</feature>
<feature type="binding site" evidence="1">
    <location>
        <position position="248"/>
    </location>
    <ligand>
        <name>substrate</name>
    </ligand>
</feature>
<feature type="binding site" evidence="1">
    <location>
        <position position="252"/>
    </location>
    <ligand>
        <name>substrate</name>
    </ligand>
</feature>
<feature type="binding site" evidence="1">
    <location>
        <position position="253"/>
    </location>
    <ligand>
        <name>NAD(+)</name>
        <dbReference type="ChEBI" id="CHEBI:57540"/>
    </ligand>
</feature>
<feature type="binding site" evidence="1">
    <location>
        <begin position="282"/>
        <end position="287"/>
    </location>
    <ligand>
        <name>NAD(+)</name>
        <dbReference type="ChEBI" id="CHEBI:57540"/>
    </ligand>
</feature>
<feature type="binding site" evidence="1">
    <location>
        <position position="305"/>
    </location>
    <ligand>
        <name>NAD(+)</name>
        <dbReference type="ChEBI" id="CHEBI:57540"/>
    </ligand>
</feature>
<feature type="binding site" evidence="1">
    <location>
        <position position="340"/>
    </location>
    <ligand>
        <name>NAD(+)</name>
        <dbReference type="ChEBI" id="CHEBI:57540"/>
    </ligand>
</feature>
<feature type="binding site" evidence="1">
    <location>
        <begin position="361"/>
        <end position="363"/>
    </location>
    <ligand>
        <name>NAD(+)</name>
        <dbReference type="ChEBI" id="CHEBI:57540"/>
    </ligand>
</feature>
<feature type="binding site" evidence="1">
    <location>
        <position position="409"/>
    </location>
    <ligand>
        <name>NAD(+)</name>
        <dbReference type="ChEBI" id="CHEBI:57540"/>
    </ligand>
</feature>
<protein>
    <recommendedName>
        <fullName evidence="1">Adenosylhomocysteinase</fullName>
        <ecNumber evidence="1">3.13.2.1</ecNumber>
    </recommendedName>
    <alternativeName>
        <fullName evidence="1">S-adenosyl-L-homocysteine hydrolase</fullName>
        <shortName evidence="1">AdoHcyase</shortName>
    </alternativeName>
</protein>